<proteinExistence type="inferred from homology"/>
<gene>
    <name evidence="1" type="primary">rpmG</name>
    <name type="ordered locus">BARBAKC583_0847</name>
</gene>
<comment type="similarity">
    <text evidence="1">Belongs to the bacterial ribosomal protein bL33 family.</text>
</comment>
<reference key="1">
    <citation type="submission" date="2006-12" db="EMBL/GenBank/DDBJ databases">
        <authorList>
            <person name="Hendrix L."/>
            <person name="Mohamoud Y."/>
            <person name="Radune D."/>
            <person name="Shvartsbeyn A."/>
            <person name="Daugherty S."/>
            <person name="Dodson R."/>
            <person name="Durkin A.S."/>
            <person name="Harkins D."/>
            <person name="Huot H."/>
            <person name="Kothari S.P."/>
            <person name="Madupu R."/>
            <person name="Li J."/>
            <person name="Nelson W.C."/>
            <person name="Shrivastava S."/>
            <person name="Giglio M.G."/>
            <person name="Haft D."/>
            <person name="Selengut J."/>
            <person name="Fraser-Ligget C."/>
            <person name="Seshadri R."/>
        </authorList>
    </citation>
    <scope>NUCLEOTIDE SEQUENCE [LARGE SCALE GENOMIC DNA]</scope>
    <source>
        <strain>ATCC 35685 / KC583 / Herrer 020/F12,63</strain>
    </source>
</reference>
<name>RL33_BARBK</name>
<evidence type="ECO:0000255" key="1">
    <source>
        <dbReference type="HAMAP-Rule" id="MF_00294"/>
    </source>
</evidence>
<evidence type="ECO:0000305" key="2"/>
<protein>
    <recommendedName>
        <fullName evidence="1">Large ribosomal subunit protein bL33</fullName>
    </recommendedName>
    <alternativeName>
        <fullName evidence="2">50S ribosomal protein L33</fullName>
    </alternativeName>
</protein>
<organism>
    <name type="scientific">Bartonella bacilliformis (strain ATCC 35685 / KC583 / Herrer 020/F12,63)</name>
    <dbReference type="NCBI Taxonomy" id="360095"/>
    <lineage>
        <taxon>Bacteria</taxon>
        <taxon>Pseudomonadati</taxon>
        <taxon>Pseudomonadota</taxon>
        <taxon>Alphaproteobacteria</taxon>
        <taxon>Hyphomicrobiales</taxon>
        <taxon>Bartonellaceae</taxon>
        <taxon>Bartonella</taxon>
    </lineage>
</organism>
<sequence length="55" mass="6397">MAKAATIKIKLLSTADTGFFYVTKKNSRTMTDKMSKRKYDPIVKKHVEFKETKIK</sequence>
<accession>A1UT31</accession>
<keyword id="KW-0687">Ribonucleoprotein</keyword>
<keyword id="KW-0689">Ribosomal protein</keyword>
<feature type="chain" id="PRO_1000004145" description="Large ribosomal subunit protein bL33">
    <location>
        <begin position="1"/>
        <end position="55"/>
    </location>
</feature>
<dbReference type="EMBL" id="CP000524">
    <property type="protein sequence ID" value="ABM45201.1"/>
    <property type="molecule type" value="Genomic_DNA"/>
</dbReference>
<dbReference type="RefSeq" id="WP_005767215.1">
    <property type="nucleotide sequence ID" value="NC_008783.1"/>
</dbReference>
<dbReference type="SMR" id="A1UT31"/>
<dbReference type="STRING" id="360095.BARBAKC583_0847"/>
<dbReference type="GeneID" id="4683848"/>
<dbReference type="KEGG" id="bbk:BARBAKC583_0847"/>
<dbReference type="eggNOG" id="COG0267">
    <property type="taxonomic scope" value="Bacteria"/>
</dbReference>
<dbReference type="HOGENOM" id="CLU_190949_1_1_5"/>
<dbReference type="OrthoDB" id="21586at2"/>
<dbReference type="Proteomes" id="UP000000643">
    <property type="component" value="Chromosome"/>
</dbReference>
<dbReference type="GO" id="GO:0022625">
    <property type="term" value="C:cytosolic large ribosomal subunit"/>
    <property type="evidence" value="ECO:0007669"/>
    <property type="project" value="TreeGrafter"/>
</dbReference>
<dbReference type="GO" id="GO:0003735">
    <property type="term" value="F:structural constituent of ribosome"/>
    <property type="evidence" value="ECO:0007669"/>
    <property type="project" value="InterPro"/>
</dbReference>
<dbReference type="GO" id="GO:0006412">
    <property type="term" value="P:translation"/>
    <property type="evidence" value="ECO:0007669"/>
    <property type="project" value="UniProtKB-UniRule"/>
</dbReference>
<dbReference type="Gene3D" id="2.20.28.120">
    <property type="entry name" value="Ribosomal protein L33"/>
    <property type="match status" value="1"/>
</dbReference>
<dbReference type="HAMAP" id="MF_00294">
    <property type="entry name" value="Ribosomal_bL33"/>
    <property type="match status" value="1"/>
</dbReference>
<dbReference type="InterPro" id="IPR001705">
    <property type="entry name" value="Ribosomal_bL33"/>
</dbReference>
<dbReference type="InterPro" id="IPR018264">
    <property type="entry name" value="Ribosomal_bL33_CS"/>
</dbReference>
<dbReference type="InterPro" id="IPR038584">
    <property type="entry name" value="Ribosomal_bL33_sf"/>
</dbReference>
<dbReference type="InterPro" id="IPR011332">
    <property type="entry name" value="Ribosomal_zn-bd"/>
</dbReference>
<dbReference type="NCBIfam" id="NF001860">
    <property type="entry name" value="PRK00595.1"/>
    <property type="match status" value="1"/>
</dbReference>
<dbReference type="NCBIfam" id="TIGR01023">
    <property type="entry name" value="rpmG_bact"/>
    <property type="match status" value="1"/>
</dbReference>
<dbReference type="PANTHER" id="PTHR15238">
    <property type="entry name" value="54S RIBOSOMAL PROTEIN L39, MITOCHONDRIAL"/>
    <property type="match status" value="1"/>
</dbReference>
<dbReference type="PANTHER" id="PTHR15238:SF1">
    <property type="entry name" value="LARGE RIBOSOMAL SUBUNIT PROTEIN BL33M"/>
    <property type="match status" value="1"/>
</dbReference>
<dbReference type="Pfam" id="PF00471">
    <property type="entry name" value="Ribosomal_L33"/>
    <property type="match status" value="1"/>
</dbReference>
<dbReference type="SUPFAM" id="SSF57829">
    <property type="entry name" value="Zn-binding ribosomal proteins"/>
    <property type="match status" value="1"/>
</dbReference>
<dbReference type="PROSITE" id="PS00582">
    <property type="entry name" value="RIBOSOMAL_L33"/>
    <property type="match status" value="1"/>
</dbReference>